<organism>
    <name type="scientific">Synechococcus sp. (strain JA-3-3Ab)</name>
    <name type="common">Cyanobacteria bacterium Yellowstone A-Prime</name>
    <dbReference type="NCBI Taxonomy" id="321327"/>
    <lineage>
        <taxon>Bacteria</taxon>
        <taxon>Bacillati</taxon>
        <taxon>Cyanobacteriota</taxon>
        <taxon>Cyanophyceae</taxon>
        <taxon>Synechococcales</taxon>
        <taxon>Synechococcaceae</taxon>
        <taxon>Synechococcus</taxon>
    </lineage>
</organism>
<feature type="chain" id="PRO_0000346532" description="PKHD-type hydroxylase CYA_2611">
    <location>
        <begin position="1"/>
        <end position="224"/>
    </location>
</feature>
<feature type="domain" description="Fe2OG dioxygenase" evidence="1">
    <location>
        <begin position="78"/>
        <end position="176"/>
    </location>
</feature>
<feature type="binding site" evidence="1">
    <location>
        <position position="96"/>
    </location>
    <ligand>
        <name>Fe cation</name>
        <dbReference type="ChEBI" id="CHEBI:24875"/>
    </ligand>
</feature>
<feature type="binding site" evidence="1">
    <location>
        <position position="98"/>
    </location>
    <ligand>
        <name>Fe cation</name>
        <dbReference type="ChEBI" id="CHEBI:24875"/>
    </ligand>
</feature>
<feature type="binding site" evidence="1">
    <location>
        <position position="157"/>
    </location>
    <ligand>
        <name>Fe cation</name>
        <dbReference type="ChEBI" id="CHEBI:24875"/>
    </ligand>
</feature>
<feature type="binding site" evidence="1">
    <location>
        <position position="167"/>
    </location>
    <ligand>
        <name>2-oxoglutarate</name>
        <dbReference type="ChEBI" id="CHEBI:16810"/>
    </ligand>
</feature>
<proteinExistence type="inferred from homology"/>
<dbReference type="EC" id="1.14.11.-" evidence="1"/>
<dbReference type="EMBL" id="CP000239">
    <property type="protein sequence ID" value="ABD00726.1"/>
    <property type="molecule type" value="Genomic_DNA"/>
</dbReference>
<dbReference type="RefSeq" id="WP_011431398.1">
    <property type="nucleotide sequence ID" value="NC_007775.1"/>
</dbReference>
<dbReference type="SMR" id="Q2JRM5"/>
<dbReference type="KEGG" id="cya:CYA_2611"/>
<dbReference type="eggNOG" id="COG3128">
    <property type="taxonomic scope" value="Bacteria"/>
</dbReference>
<dbReference type="HOGENOM" id="CLU_106663_0_0_3"/>
<dbReference type="OrthoDB" id="9812472at2"/>
<dbReference type="Proteomes" id="UP000008818">
    <property type="component" value="Chromosome"/>
</dbReference>
<dbReference type="GO" id="GO:0016706">
    <property type="term" value="F:2-oxoglutarate-dependent dioxygenase activity"/>
    <property type="evidence" value="ECO:0007669"/>
    <property type="project" value="UniProtKB-UniRule"/>
</dbReference>
<dbReference type="GO" id="GO:0005506">
    <property type="term" value="F:iron ion binding"/>
    <property type="evidence" value="ECO:0007669"/>
    <property type="project" value="UniProtKB-UniRule"/>
</dbReference>
<dbReference type="GO" id="GO:0031418">
    <property type="term" value="F:L-ascorbic acid binding"/>
    <property type="evidence" value="ECO:0007669"/>
    <property type="project" value="UniProtKB-KW"/>
</dbReference>
<dbReference type="GO" id="GO:0006974">
    <property type="term" value="P:DNA damage response"/>
    <property type="evidence" value="ECO:0007669"/>
    <property type="project" value="TreeGrafter"/>
</dbReference>
<dbReference type="GO" id="GO:0006879">
    <property type="term" value="P:intracellular iron ion homeostasis"/>
    <property type="evidence" value="ECO:0007669"/>
    <property type="project" value="TreeGrafter"/>
</dbReference>
<dbReference type="Gene3D" id="2.60.120.620">
    <property type="entry name" value="q2cbj1_9rhob like domain"/>
    <property type="match status" value="1"/>
</dbReference>
<dbReference type="Gene3D" id="4.10.860.20">
    <property type="entry name" value="Rabenosyn, Rab binding domain"/>
    <property type="match status" value="1"/>
</dbReference>
<dbReference type="HAMAP" id="MF_00657">
    <property type="entry name" value="Hydroxyl_YbiX"/>
    <property type="match status" value="1"/>
</dbReference>
<dbReference type="InterPro" id="IPR005123">
    <property type="entry name" value="Oxoglu/Fe-dep_dioxygenase_dom"/>
</dbReference>
<dbReference type="InterPro" id="IPR041097">
    <property type="entry name" value="PKHD_C"/>
</dbReference>
<dbReference type="InterPro" id="IPR023550">
    <property type="entry name" value="PKHD_hydroxylase"/>
</dbReference>
<dbReference type="InterPro" id="IPR006620">
    <property type="entry name" value="Pro_4_hyd_alph"/>
</dbReference>
<dbReference type="InterPro" id="IPR044862">
    <property type="entry name" value="Pro_4_hyd_alph_FE2OG_OXY"/>
</dbReference>
<dbReference type="NCBIfam" id="NF003974">
    <property type="entry name" value="PRK05467.1-3"/>
    <property type="match status" value="1"/>
</dbReference>
<dbReference type="NCBIfam" id="NF003975">
    <property type="entry name" value="PRK05467.1-4"/>
    <property type="match status" value="1"/>
</dbReference>
<dbReference type="PANTHER" id="PTHR41536">
    <property type="entry name" value="PKHD-TYPE HYDROXYLASE YBIX"/>
    <property type="match status" value="1"/>
</dbReference>
<dbReference type="PANTHER" id="PTHR41536:SF1">
    <property type="entry name" value="PKHD-TYPE HYDROXYLASE YBIX"/>
    <property type="match status" value="1"/>
</dbReference>
<dbReference type="Pfam" id="PF13640">
    <property type="entry name" value="2OG-FeII_Oxy_3"/>
    <property type="match status" value="1"/>
</dbReference>
<dbReference type="Pfam" id="PF18331">
    <property type="entry name" value="PKHD_C"/>
    <property type="match status" value="1"/>
</dbReference>
<dbReference type="SMART" id="SM00702">
    <property type="entry name" value="P4Hc"/>
    <property type="match status" value="1"/>
</dbReference>
<dbReference type="PROSITE" id="PS51471">
    <property type="entry name" value="FE2OG_OXY"/>
    <property type="match status" value="1"/>
</dbReference>
<keyword id="KW-0223">Dioxygenase</keyword>
<keyword id="KW-0408">Iron</keyword>
<keyword id="KW-0479">Metal-binding</keyword>
<keyword id="KW-0560">Oxidoreductase</keyword>
<keyword id="KW-0847">Vitamin C</keyword>
<sequence length="224" mass="25377">MILCIGDVLSLAELQQILSLIADAEFVDGALTAGWNARLVKNNRQMPKGSLQQRKIEEIILAALERNLLFQMAARPKLIHSILISCYEAGMSYGTHTDDALMLDRHQLMRTDISFTLFLSAPEDYDGGELKIESSEGEQAYKLPAGALILYPASTLHRVEPVTRGIRYAAVSWVQSLIRDPQEREILFDLQTVRQQMFQESGKTRHFDLISKVYANLLRKWAEL</sequence>
<comment type="cofactor">
    <cofactor evidence="1">
        <name>Fe(2+)</name>
        <dbReference type="ChEBI" id="CHEBI:29033"/>
    </cofactor>
    <text evidence="1">Binds 1 Fe(2+) ion per subunit.</text>
</comment>
<comment type="cofactor">
    <cofactor evidence="1">
        <name>L-ascorbate</name>
        <dbReference type="ChEBI" id="CHEBI:38290"/>
    </cofactor>
</comment>
<name>Y2611_SYNJA</name>
<accession>Q2JRM5</accession>
<gene>
    <name type="ordered locus">CYA_2611</name>
</gene>
<evidence type="ECO:0000255" key="1">
    <source>
        <dbReference type="HAMAP-Rule" id="MF_00657"/>
    </source>
</evidence>
<reference key="1">
    <citation type="journal article" date="2007" name="ISME J.">
        <title>Population level functional diversity in a microbial community revealed by comparative genomic and metagenomic analyses.</title>
        <authorList>
            <person name="Bhaya D."/>
            <person name="Grossman A.R."/>
            <person name="Steunou A.-S."/>
            <person name="Khuri N."/>
            <person name="Cohan F.M."/>
            <person name="Hamamura N."/>
            <person name="Melendrez M.C."/>
            <person name="Bateson M.M."/>
            <person name="Ward D.M."/>
            <person name="Heidelberg J.F."/>
        </authorList>
    </citation>
    <scope>NUCLEOTIDE SEQUENCE [LARGE SCALE GENOMIC DNA]</scope>
    <source>
        <strain>JA-3-3Ab</strain>
    </source>
</reference>
<protein>
    <recommendedName>
        <fullName evidence="1">PKHD-type hydroxylase CYA_2611</fullName>
        <ecNumber evidence="1">1.14.11.-</ecNumber>
    </recommendedName>
</protein>